<proteinExistence type="inferred from homology"/>
<comment type="function">
    <text evidence="1">RNA chaperone that binds small regulatory RNA (sRNAs) and mRNAs to facilitate mRNA translational regulation in response to envelope stress, environmental stress and changes in metabolite concentrations. Also binds with high specificity to tRNAs.</text>
</comment>
<comment type="subunit">
    <text evidence="1">Homohexamer.</text>
</comment>
<comment type="similarity">
    <text evidence="1">Belongs to the Hfq family.</text>
</comment>
<gene>
    <name evidence="1" type="primary">hfq</name>
    <name type="ordered locus">PSEEN4943</name>
</gene>
<keyword id="KW-0694">RNA-binding</keyword>
<keyword id="KW-0346">Stress response</keyword>
<organism>
    <name type="scientific">Pseudomonas entomophila (strain L48)</name>
    <dbReference type="NCBI Taxonomy" id="384676"/>
    <lineage>
        <taxon>Bacteria</taxon>
        <taxon>Pseudomonadati</taxon>
        <taxon>Pseudomonadota</taxon>
        <taxon>Gammaproteobacteria</taxon>
        <taxon>Pseudomonadales</taxon>
        <taxon>Pseudomonadaceae</taxon>
        <taxon>Pseudomonas</taxon>
    </lineage>
</organism>
<dbReference type="EMBL" id="CT573326">
    <property type="protein sequence ID" value="CAK17587.1"/>
    <property type="molecule type" value="Genomic_DNA"/>
</dbReference>
<dbReference type="RefSeq" id="WP_011535948.1">
    <property type="nucleotide sequence ID" value="NC_008027.1"/>
</dbReference>
<dbReference type="SMR" id="Q1I449"/>
<dbReference type="STRING" id="384676.PSEEN4943"/>
<dbReference type="GeneID" id="32807891"/>
<dbReference type="KEGG" id="pen:PSEEN4943"/>
<dbReference type="eggNOG" id="COG1923">
    <property type="taxonomic scope" value="Bacteria"/>
</dbReference>
<dbReference type="HOGENOM" id="CLU_113688_2_2_6"/>
<dbReference type="OrthoDB" id="9799751at2"/>
<dbReference type="Proteomes" id="UP000000658">
    <property type="component" value="Chromosome"/>
</dbReference>
<dbReference type="GO" id="GO:0005829">
    <property type="term" value="C:cytosol"/>
    <property type="evidence" value="ECO:0007669"/>
    <property type="project" value="TreeGrafter"/>
</dbReference>
<dbReference type="GO" id="GO:0003723">
    <property type="term" value="F:RNA binding"/>
    <property type="evidence" value="ECO:0007669"/>
    <property type="project" value="UniProtKB-UniRule"/>
</dbReference>
<dbReference type="GO" id="GO:0006355">
    <property type="term" value="P:regulation of DNA-templated transcription"/>
    <property type="evidence" value="ECO:0007669"/>
    <property type="project" value="InterPro"/>
</dbReference>
<dbReference type="GO" id="GO:0043487">
    <property type="term" value="P:regulation of RNA stability"/>
    <property type="evidence" value="ECO:0007669"/>
    <property type="project" value="TreeGrafter"/>
</dbReference>
<dbReference type="GO" id="GO:0045974">
    <property type="term" value="P:regulation of translation, ncRNA-mediated"/>
    <property type="evidence" value="ECO:0007669"/>
    <property type="project" value="TreeGrafter"/>
</dbReference>
<dbReference type="CDD" id="cd01716">
    <property type="entry name" value="Hfq"/>
    <property type="match status" value="1"/>
</dbReference>
<dbReference type="FunFam" id="2.30.30.100:FF:000001">
    <property type="entry name" value="RNA-binding protein Hfq"/>
    <property type="match status" value="1"/>
</dbReference>
<dbReference type="Gene3D" id="2.30.30.100">
    <property type="match status" value="1"/>
</dbReference>
<dbReference type="HAMAP" id="MF_00436">
    <property type="entry name" value="Hfq"/>
    <property type="match status" value="1"/>
</dbReference>
<dbReference type="InterPro" id="IPR005001">
    <property type="entry name" value="Hfq"/>
</dbReference>
<dbReference type="InterPro" id="IPR010920">
    <property type="entry name" value="LSM_dom_sf"/>
</dbReference>
<dbReference type="InterPro" id="IPR047575">
    <property type="entry name" value="Sm"/>
</dbReference>
<dbReference type="NCBIfam" id="TIGR02383">
    <property type="entry name" value="Hfq"/>
    <property type="match status" value="1"/>
</dbReference>
<dbReference type="NCBIfam" id="NF001602">
    <property type="entry name" value="PRK00395.1"/>
    <property type="match status" value="1"/>
</dbReference>
<dbReference type="PANTHER" id="PTHR34772">
    <property type="entry name" value="RNA-BINDING PROTEIN HFQ"/>
    <property type="match status" value="1"/>
</dbReference>
<dbReference type="PANTHER" id="PTHR34772:SF1">
    <property type="entry name" value="RNA-BINDING PROTEIN HFQ"/>
    <property type="match status" value="1"/>
</dbReference>
<dbReference type="Pfam" id="PF17209">
    <property type="entry name" value="Hfq"/>
    <property type="match status" value="1"/>
</dbReference>
<dbReference type="SUPFAM" id="SSF50182">
    <property type="entry name" value="Sm-like ribonucleoproteins"/>
    <property type="match status" value="1"/>
</dbReference>
<dbReference type="PROSITE" id="PS52002">
    <property type="entry name" value="SM"/>
    <property type="match status" value="1"/>
</dbReference>
<protein>
    <recommendedName>
        <fullName evidence="1">RNA-binding protein Hfq</fullName>
    </recommendedName>
</protein>
<feature type="chain" id="PRO_1000025926" description="RNA-binding protein Hfq">
    <location>
        <begin position="1"/>
        <end position="86"/>
    </location>
</feature>
<feature type="domain" description="Sm" evidence="2">
    <location>
        <begin position="9"/>
        <end position="68"/>
    </location>
</feature>
<feature type="region of interest" description="Disordered" evidence="3">
    <location>
        <begin position="66"/>
        <end position="86"/>
    </location>
</feature>
<feature type="compositionally biased region" description="Basic and acidic residues" evidence="3">
    <location>
        <begin position="75"/>
        <end position="86"/>
    </location>
</feature>
<evidence type="ECO:0000255" key="1">
    <source>
        <dbReference type="HAMAP-Rule" id="MF_00436"/>
    </source>
</evidence>
<evidence type="ECO:0000255" key="2">
    <source>
        <dbReference type="PROSITE-ProRule" id="PRU01346"/>
    </source>
</evidence>
<evidence type="ECO:0000256" key="3">
    <source>
        <dbReference type="SAM" id="MobiDB-lite"/>
    </source>
</evidence>
<reference key="1">
    <citation type="journal article" date="2006" name="Nat. Biotechnol.">
        <title>Complete genome sequence of the entomopathogenic and metabolically versatile soil bacterium Pseudomonas entomophila.</title>
        <authorList>
            <person name="Vodovar N."/>
            <person name="Vallenet D."/>
            <person name="Cruveiller S."/>
            <person name="Rouy Z."/>
            <person name="Barbe V."/>
            <person name="Acosta C."/>
            <person name="Cattolico L."/>
            <person name="Jubin C."/>
            <person name="Lajus A."/>
            <person name="Segurens B."/>
            <person name="Vacherie B."/>
            <person name="Wincker P."/>
            <person name="Weissenbach J."/>
            <person name="Lemaitre B."/>
            <person name="Medigue C."/>
            <person name="Boccard F."/>
        </authorList>
    </citation>
    <scope>NUCLEOTIDE SEQUENCE [LARGE SCALE GENOMIC DNA]</scope>
    <source>
        <strain>L48</strain>
    </source>
</reference>
<name>HFQ_PSEE4</name>
<sequence>MSKGHSLQDPYLNTLRKEKVPVSIYLVNGIKLQGQIESFDQFVVLLKNTVSQMVYKHAISTVVPARPVRLPSPSDAEHGDSEPGNA</sequence>
<accession>Q1I449</accession>